<organism>
    <name type="scientific">Porcine transmissible gastroenteritis coronavirus (strain FS772/70)</name>
    <name type="common">TGEV</name>
    <dbReference type="NCBI Taxonomy" id="11150"/>
    <lineage>
        <taxon>Viruses</taxon>
        <taxon>Riboviria</taxon>
        <taxon>Orthornavirae</taxon>
        <taxon>Pisuviricota</taxon>
        <taxon>Pisoniviricetes</taxon>
        <taxon>Nidovirales</taxon>
        <taxon>Cornidovirineae</taxon>
        <taxon>Coronaviridae</taxon>
        <taxon>Orthocoronavirinae</taxon>
        <taxon>Alphacoronavirus</taxon>
        <taxon>Tegacovirus</taxon>
        <taxon>Alphacoronavirus 1</taxon>
    </lineage>
</organism>
<feature type="chain" id="PRO_0000106103" description="Non-structural protein 3a">
    <location>
        <begin position="1"/>
        <end position="62"/>
    </location>
</feature>
<reference key="1">
    <citation type="journal article" date="1989" name="Arch. Virol.">
        <title>Sequence of the coding regions from the 3.0 kb and 3.9 kb mRNA. Subgenomic species from a virulent isolate of transmissible gastroenteritis virus.</title>
        <authorList>
            <person name="Britton P."/>
            <person name="Lopez-Otin C."/>
            <person name="Martin-Alonso J.M."/>
            <person name="Parra F."/>
        </authorList>
    </citation>
    <scope>NUCLEOTIDE SEQUENCE [GENOMIC RNA]</scope>
</reference>
<reference key="2">
    <citation type="journal article" date="1990" name="Virus Res.">
        <title>Sequence of the S gene from a virulent British field isolate of transmissible gastroenteritis virus.</title>
        <authorList>
            <person name="Britton P."/>
            <person name="Page K.W."/>
        </authorList>
    </citation>
    <scope>NUCLEOTIDE SEQUENCE [GENOMIC RNA] OF 1-21</scope>
</reference>
<dbReference type="EMBL" id="X14551">
    <property type="protein sequence ID" value="CAA32686.1"/>
    <property type="molecule type" value="Genomic_RNA"/>
</dbReference>
<dbReference type="EMBL" id="X53128">
    <property type="protein sequence ID" value="CAA37288.1"/>
    <property type="molecule type" value="Genomic_RNA"/>
</dbReference>
<dbReference type="PIR" id="A60076">
    <property type="entry name" value="A60076"/>
</dbReference>
<dbReference type="SMR" id="P18451"/>
<dbReference type="InterPro" id="IPR006784">
    <property type="entry name" value="Coronavirus_Orf3"/>
</dbReference>
<dbReference type="Pfam" id="PF04694">
    <property type="entry name" value="Corona_3"/>
    <property type="match status" value="1"/>
</dbReference>
<sequence>MDIVKSINTSVDAVLDELDCAYFAVTLKVEFKTGKLLVCIGFGDTLLAARDKAYAKLGLSTI</sequence>
<name>NS3A_CVPFS</name>
<organismHost>
    <name type="scientific">Sus scrofa</name>
    <name type="common">Pig</name>
    <dbReference type="NCBI Taxonomy" id="9823"/>
</organismHost>
<protein>
    <recommendedName>
        <fullName>Non-structural protein 3a</fullName>
        <shortName>ns3a</shortName>
    </recommendedName>
    <alternativeName>
        <fullName>Accessory protein 3a</fullName>
    </alternativeName>
    <alternativeName>
        <fullName>X2a protein</fullName>
    </alternativeName>
</protein>
<accession>P18451</accession>
<gene>
    <name type="ORF">3a</name>
</gene>
<proteinExistence type="predicted"/>